<evidence type="ECO:0000255" key="1">
    <source>
        <dbReference type="HAMAP-Rule" id="MF_00503"/>
    </source>
</evidence>
<evidence type="ECO:0000305" key="2"/>
<accession>Q3II82</accession>
<protein>
    <recommendedName>
        <fullName evidence="1">Large ribosomal subunit protein bL9</fullName>
    </recommendedName>
    <alternativeName>
        <fullName evidence="2">50S ribosomal protein L9</fullName>
    </alternativeName>
</protein>
<name>RL9_PSET1</name>
<proteinExistence type="inferred from homology"/>
<keyword id="KW-1185">Reference proteome</keyword>
<keyword id="KW-0687">Ribonucleoprotein</keyword>
<keyword id="KW-0689">Ribosomal protein</keyword>
<keyword id="KW-0694">RNA-binding</keyword>
<keyword id="KW-0699">rRNA-binding</keyword>
<sequence>MQVILLDKIANLGGLGDQVVVKSGFARNFLFPQGKAVPATKANIETFDARRAELEAKIADQLVAAQARADKLEALAEVTLVSKAGDEGKLFGSIGTRDIADAISAVGVEVAKSEVRLPLGTIRETGEFDVSIAVHSEVTATIKVIVIAEA</sequence>
<dbReference type="EMBL" id="CR954246">
    <property type="protein sequence ID" value="CAI87488.1"/>
    <property type="molecule type" value="Genomic_DNA"/>
</dbReference>
<dbReference type="SMR" id="Q3II82"/>
<dbReference type="STRING" id="326442.PSHAa2439"/>
<dbReference type="KEGG" id="pha:PSHAa2439"/>
<dbReference type="PATRIC" id="fig|326442.8.peg.2352"/>
<dbReference type="eggNOG" id="COG0359">
    <property type="taxonomic scope" value="Bacteria"/>
</dbReference>
<dbReference type="HOGENOM" id="CLU_078938_4_1_6"/>
<dbReference type="BioCyc" id="PHAL326442:PSHA_RS12025-MONOMER"/>
<dbReference type="Proteomes" id="UP000006843">
    <property type="component" value="Chromosome I"/>
</dbReference>
<dbReference type="GO" id="GO:1990904">
    <property type="term" value="C:ribonucleoprotein complex"/>
    <property type="evidence" value="ECO:0007669"/>
    <property type="project" value="UniProtKB-KW"/>
</dbReference>
<dbReference type="GO" id="GO:0005840">
    <property type="term" value="C:ribosome"/>
    <property type="evidence" value="ECO:0007669"/>
    <property type="project" value="UniProtKB-KW"/>
</dbReference>
<dbReference type="GO" id="GO:0019843">
    <property type="term" value="F:rRNA binding"/>
    <property type="evidence" value="ECO:0007669"/>
    <property type="project" value="UniProtKB-UniRule"/>
</dbReference>
<dbReference type="GO" id="GO:0003735">
    <property type="term" value="F:structural constituent of ribosome"/>
    <property type="evidence" value="ECO:0007669"/>
    <property type="project" value="InterPro"/>
</dbReference>
<dbReference type="GO" id="GO:0006412">
    <property type="term" value="P:translation"/>
    <property type="evidence" value="ECO:0007669"/>
    <property type="project" value="UniProtKB-UniRule"/>
</dbReference>
<dbReference type="FunFam" id="3.10.430.100:FF:000001">
    <property type="entry name" value="50S ribosomal protein L9"/>
    <property type="match status" value="1"/>
</dbReference>
<dbReference type="FunFam" id="3.40.5.10:FF:000001">
    <property type="entry name" value="50S ribosomal protein L9"/>
    <property type="match status" value="1"/>
</dbReference>
<dbReference type="Gene3D" id="3.10.430.100">
    <property type="entry name" value="Ribosomal protein L9, C-terminal domain"/>
    <property type="match status" value="1"/>
</dbReference>
<dbReference type="Gene3D" id="3.40.5.10">
    <property type="entry name" value="Ribosomal protein L9, N-terminal domain"/>
    <property type="match status" value="1"/>
</dbReference>
<dbReference type="HAMAP" id="MF_00503">
    <property type="entry name" value="Ribosomal_bL9"/>
    <property type="match status" value="1"/>
</dbReference>
<dbReference type="InterPro" id="IPR000244">
    <property type="entry name" value="Ribosomal_bL9"/>
</dbReference>
<dbReference type="InterPro" id="IPR009027">
    <property type="entry name" value="Ribosomal_bL9/RNase_H1_N"/>
</dbReference>
<dbReference type="InterPro" id="IPR020594">
    <property type="entry name" value="Ribosomal_bL9_bac/chp"/>
</dbReference>
<dbReference type="InterPro" id="IPR020069">
    <property type="entry name" value="Ribosomal_bL9_C"/>
</dbReference>
<dbReference type="InterPro" id="IPR036791">
    <property type="entry name" value="Ribosomal_bL9_C_sf"/>
</dbReference>
<dbReference type="InterPro" id="IPR020070">
    <property type="entry name" value="Ribosomal_bL9_N"/>
</dbReference>
<dbReference type="InterPro" id="IPR036935">
    <property type="entry name" value="Ribosomal_bL9_N_sf"/>
</dbReference>
<dbReference type="NCBIfam" id="TIGR00158">
    <property type="entry name" value="L9"/>
    <property type="match status" value="1"/>
</dbReference>
<dbReference type="PANTHER" id="PTHR21368">
    <property type="entry name" value="50S RIBOSOMAL PROTEIN L9"/>
    <property type="match status" value="1"/>
</dbReference>
<dbReference type="Pfam" id="PF03948">
    <property type="entry name" value="Ribosomal_L9_C"/>
    <property type="match status" value="1"/>
</dbReference>
<dbReference type="Pfam" id="PF01281">
    <property type="entry name" value="Ribosomal_L9_N"/>
    <property type="match status" value="1"/>
</dbReference>
<dbReference type="SUPFAM" id="SSF55658">
    <property type="entry name" value="L9 N-domain-like"/>
    <property type="match status" value="1"/>
</dbReference>
<dbReference type="SUPFAM" id="SSF55653">
    <property type="entry name" value="Ribosomal protein L9 C-domain"/>
    <property type="match status" value="1"/>
</dbReference>
<dbReference type="PROSITE" id="PS00651">
    <property type="entry name" value="RIBOSOMAL_L9"/>
    <property type="match status" value="1"/>
</dbReference>
<organism>
    <name type="scientific">Pseudoalteromonas translucida (strain TAC 125)</name>
    <dbReference type="NCBI Taxonomy" id="326442"/>
    <lineage>
        <taxon>Bacteria</taxon>
        <taxon>Pseudomonadati</taxon>
        <taxon>Pseudomonadota</taxon>
        <taxon>Gammaproteobacteria</taxon>
        <taxon>Alteromonadales</taxon>
        <taxon>Pseudoalteromonadaceae</taxon>
        <taxon>Pseudoalteromonas</taxon>
    </lineage>
</organism>
<feature type="chain" id="PRO_0000236570" description="Large ribosomal subunit protein bL9">
    <location>
        <begin position="1"/>
        <end position="150"/>
    </location>
</feature>
<comment type="function">
    <text evidence="1">Binds to the 23S rRNA.</text>
</comment>
<comment type="similarity">
    <text evidence="1">Belongs to the bacterial ribosomal protein bL9 family.</text>
</comment>
<reference key="1">
    <citation type="journal article" date="2005" name="Genome Res.">
        <title>Coping with cold: the genome of the versatile marine Antarctica bacterium Pseudoalteromonas haloplanktis TAC125.</title>
        <authorList>
            <person name="Medigue C."/>
            <person name="Krin E."/>
            <person name="Pascal G."/>
            <person name="Barbe V."/>
            <person name="Bernsel A."/>
            <person name="Bertin P.N."/>
            <person name="Cheung F."/>
            <person name="Cruveiller S."/>
            <person name="D'Amico S."/>
            <person name="Duilio A."/>
            <person name="Fang G."/>
            <person name="Feller G."/>
            <person name="Ho C."/>
            <person name="Mangenot S."/>
            <person name="Marino G."/>
            <person name="Nilsson J."/>
            <person name="Parrilli E."/>
            <person name="Rocha E.P.C."/>
            <person name="Rouy Z."/>
            <person name="Sekowska A."/>
            <person name="Tutino M.L."/>
            <person name="Vallenet D."/>
            <person name="von Heijne G."/>
            <person name="Danchin A."/>
        </authorList>
    </citation>
    <scope>NUCLEOTIDE SEQUENCE [LARGE SCALE GENOMIC DNA]</scope>
    <source>
        <strain>TAC 125</strain>
    </source>
</reference>
<gene>
    <name evidence="1" type="primary">rplI</name>
    <name type="ordered locus">PSHAa2439</name>
</gene>